<keyword id="KW-0963">Cytoplasm</keyword>
<keyword id="KW-0210">Decarboxylase</keyword>
<keyword id="KW-0456">Lyase</keyword>
<keyword id="KW-0627">Porphyrin biosynthesis</keyword>
<gene>
    <name evidence="1" type="primary">hemE</name>
    <name type="ordered locus">RBE_1429</name>
</gene>
<sequence>MTLISSPIKRLDNKPPIWLMRQAGRYLSEYMAVRKEVKNFLEFCYDVDKATEVTLQPIKRFGFDAAIIFSDILVLPHALGWEVDFKENIGPLLKQFKSKEDFKYLQDNSNDKLEKVYEIVKKVRKELPKSTSLIGFAGSPWTVMTYMLEGKGKQDFRVSKKFIYENKDLAKELLNFITEKTIHHLINQIKSGANIIKIFDSWAGILPEEEFKKFVIEPTKKIIKSIKGYFPDIPIITFPKGAGLLYEKFLEEVPTDIIAIDPLIPLEKMKLWSNKVTVQGNLDPVILLTNKKIIKEKIHKILSIMENKNFIFNLGHGILPETPPENVEFLVKCIREYEYK</sequence>
<accession>Q1RGK4</accession>
<evidence type="ECO:0000255" key="1">
    <source>
        <dbReference type="HAMAP-Rule" id="MF_00218"/>
    </source>
</evidence>
<comment type="function">
    <text evidence="1">Catalyzes the decarboxylation of four acetate groups of uroporphyrinogen-III to yield coproporphyrinogen-III.</text>
</comment>
<comment type="catalytic activity">
    <reaction evidence="1">
        <text>uroporphyrinogen III + 4 H(+) = coproporphyrinogen III + 4 CO2</text>
        <dbReference type="Rhea" id="RHEA:19865"/>
        <dbReference type="ChEBI" id="CHEBI:15378"/>
        <dbReference type="ChEBI" id="CHEBI:16526"/>
        <dbReference type="ChEBI" id="CHEBI:57308"/>
        <dbReference type="ChEBI" id="CHEBI:57309"/>
        <dbReference type="EC" id="4.1.1.37"/>
    </reaction>
</comment>
<comment type="pathway">
    <text evidence="1">Porphyrin-containing compound metabolism; protoporphyrin-IX biosynthesis; coproporphyrinogen-III from 5-aminolevulinate: step 4/4.</text>
</comment>
<comment type="subunit">
    <text evidence="1">Homodimer.</text>
</comment>
<comment type="subcellular location">
    <subcellularLocation>
        <location evidence="1">Cytoplasm</location>
    </subcellularLocation>
</comment>
<comment type="similarity">
    <text evidence="1">Belongs to the uroporphyrinogen decarboxylase family.</text>
</comment>
<name>DCUP_RICBR</name>
<protein>
    <recommendedName>
        <fullName evidence="1">Uroporphyrinogen decarboxylase</fullName>
        <shortName evidence="1">UPD</shortName>
        <shortName evidence="1">URO-D</shortName>
        <ecNumber evidence="1">4.1.1.37</ecNumber>
    </recommendedName>
</protein>
<organism>
    <name type="scientific">Rickettsia bellii (strain RML369-C)</name>
    <dbReference type="NCBI Taxonomy" id="336407"/>
    <lineage>
        <taxon>Bacteria</taxon>
        <taxon>Pseudomonadati</taxon>
        <taxon>Pseudomonadota</taxon>
        <taxon>Alphaproteobacteria</taxon>
        <taxon>Rickettsiales</taxon>
        <taxon>Rickettsiaceae</taxon>
        <taxon>Rickettsieae</taxon>
        <taxon>Rickettsia</taxon>
        <taxon>belli group</taxon>
    </lineage>
</organism>
<feature type="chain" id="PRO_0000278032" description="Uroporphyrinogen decarboxylase">
    <location>
        <begin position="1"/>
        <end position="340"/>
    </location>
</feature>
<feature type="binding site" evidence="1">
    <location>
        <begin position="21"/>
        <end position="25"/>
    </location>
    <ligand>
        <name>substrate</name>
    </ligand>
</feature>
<feature type="binding site" evidence="1">
    <location>
        <position position="40"/>
    </location>
    <ligand>
        <name>substrate</name>
    </ligand>
</feature>
<feature type="binding site" evidence="1">
    <location>
        <position position="71"/>
    </location>
    <ligand>
        <name>substrate</name>
    </ligand>
</feature>
<feature type="binding site" evidence="1">
    <location>
        <position position="146"/>
    </location>
    <ligand>
        <name>substrate</name>
    </ligand>
</feature>
<feature type="binding site" evidence="1">
    <location>
        <position position="201"/>
    </location>
    <ligand>
        <name>substrate</name>
    </ligand>
</feature>
<feature type="binding site" evidence="1">
    <location>
        <position position="316"/>
    </location>
    <ligand>
        <name>substrate</name>
    </ligand>
</feature>
<feature type="site" description="Transition state stabilizer" evidence="1">
    <location>
        <position position="71"/>
    </location>
</feature>
<proteinExistence type="inferred from homology"/>
<reference key="1">
    <citation type="journal article" date="2006" name="PLoS Genet.">
        <title>Genome sequence of Rickettsia bellii illuminates the role of amoebae in gene exchanges between intracellular pathogens.</title>
        <authorList>
            <person name="Ogata H."/>
            <person name="La Scola B."/>
            <person name="Audic S."/>
            <person name="Renesto P."/>
            <person name="Blanc G."/>
            <person name="Robert C."/>
            <person name="Fournier P.-E."/>
            <person name="Claverie J.-M."/>
            <person name="Raoult D."/>
        </authorList>
    </citation>
    <scope>NUCLEOTIDE SEQUENCE [LARGE SCALE GENOMIC DNA]</scope>
    <source>
        <strain>RML369-C</strain>
    </source>
</reference>
<dbReference type="EC" id="4.1.1.37" evidence="1"/>
<dbReference type="EMBL" id="CP000087">
    <property type="protein sequence ID" value="ABE05510.1"/>
    <property type="molecule type" value="Genomic_DNA"/>
</dbReference>
<dbReference type="RefSeq" id="WP_011478079.1">
    <property type="nucleotide sequence ID" value="NC_007940.1"/>
</dbReference>
<dbReference type="SMR" id="Q1RGK4"/>
<dbReference type="KEGG" id="rbe:RBE_1429"/>
<dbReference type="eggNOG" id="COG0407">
    <property type="taxonomic scope" value="Bacteria"/>
</dbReference>
<dbReference type="HOGENOM" id="CLU_040933_0_0_5"/>
<dbReference type="OrthoDB" id="9806656at2"/>
<dbReference type="UniPathway" id="UPA00251">
    <property type="reaction ID" value="UER00321"/>
</dbReference>
<dbReference type="Proteomes" id="UP000001951">
    <property type="component" value="Chromosome"/>
</dbReference>
<dbReference type="GO" id="GO:0005829">
    <property type="term" value="C:cytosol"/>
    <property type="evidence" value="ECO:0007669"/>
    <property type="project" value="TreeGrafter"/>
</dbReference>
<dbReference type="GO" id="GO:0004853">
    <property type="term" value="F:uroporphyrinogen decarboxylase activity"/>
    <property type="evidence" value="ECO:0007669"/>
    <property type="project" value="UniProtKB-UniRule"/>
</dbReference>
<dbReference type="GO" id="GO:0006782">
    <property type="term" value="P:protoporphyrinogen IX biosynthetic process"/>
    <property type="evidence" value="ECO:0007669"/>
    <property type="project" value="UniProtKB-UniRule"/>
</dbReference>
<dbReference type="CDD" id="cd00717">
    <property type="entry name" value="URO-D"/>
    <property type="match status" value="1"/>
</dbReference>
<dbReference type="FunFam" id="3.20.20.210:FF:000007">
    <property type="entry name" value="Uroporphyrinogen decarboxylase"/>
    <property type="match status" value="1"/>
</dbReference>
<dbReference type="Gene3D" id="3.20.20.210">
    <property type="match status" value="1"/>
</dbReference>
<dbReference type="HAMAP" id="MF_00218">
    <property type="entry name" value="URO_D"/>
    <property type="match status" value="1"/>
</dbReference>
<dbReference type="InterPro" id="IPR038071">
    <property type="entry name" value="UROD/MetE-like_sf"/>
</dbReference>
<dbReference type="InterPro" id="IPR006361">
    <property type="entry name" value="Uroporphyrinogen_deCO2ase_HemE"/>
</dbReference>
<dbReference type="InterPro" id="IPR000257">
    <property type="entry name" value="Uroporphyrinogen_deCOase"/>
</dbReference>
<dbReference type="NCBIfam" id="TIGR01464">
    <property type="entry name" value="hemE"/>
    <property type="match status" value="1"/>
</dbReference>
<dbReference type="PANTHER" id="PTHR21091">
    <property type="entry name" value="METHYLTETRAHYDROFOLATE:HOMOCYSTEINE METHYLTRANSFERASE RELATED"/>
    <property type="match status" value="1"/>
</dbReference>
<dbReference type="PANTHER" id="PTHR21091:SF169">
    <property type="entry name" value="UROPORPHYRINOGEN DECARBOXYLASE"/>
    <property type="match status" value="1"/>
</dbReference>
<dbReference type="Pfam" id="PF01208">
    <property type="entry name" value="URO-D"/>
    <property type="match status" value="1"/>
</dbReference>
<dbReference type="SUPFAM" id="SSF51726">
    <property type="entry name" value="UROD/MetE-like"/>
    <property type="match status" value="1"/>
</dbReference>
<dbReference type="PROSITE" id="PS00906">
    <property type="entry name" value="UROD_1"/>
    <property type="match status" value="1"/>
</dbReference>
<dbReference type="PROSITE" id="PS00907">
    <property type="entry name" value="UROD_2"/>
    <property type="match status" value="1"/>
</dbReference>